<sequence>MASTNISDREKALNAALAQIERSFGKGAIMRLGDATQMRVETISTGALTLDLALGGGLPKGRIVEIYGPESSGKTTLALHAVAATQQAGGVAAFVDAEHALDPVYSKALGVDIDNLLVAQPDNGESALEIVDQLVRSTAVDIIVVDSVAALVPRAEIEGEMGDTSVGSQARLMSKAMRKIAGNIGRSGCLVIFLNQLRQKIGVTYGSPEVTTGGNALKFYASVRLDIRRIQTLKKGTEGEYGIRAKVKVAKNKVAPPFRIAEFDIIFGQGISRMGCTIDLAEKCEVITRKGAWYSYNGENIAQGRDNAMKYLEENPEIAATIDQQVREKLSLVNAVFPVETEDGAEEQGEDGDF</sequence>
<gene>
    <name evidence="1" type="primary">recA</name>
    <name type="ordered locus">sll0569</name>
</gene>
<name>RECA_SYNY3</name>
<evidence type="ECO:0000255" key="1">
    <source>
        <dbReference type="HAMAP-Rule" id="MF_00268"/>
    </source>
</evidence>
<evidence type="ECO:0000269" key="2">
    <source>
    </source>
</evidence>
<evidence type="ECO:0000305" key="3">
    <source>
    </source>
</evidence>
<organism>
    <name type="scientific">Synechocystis sp. (strain ATCC 27184 / PCC 6803 / Kazusa)</name>
    <dbReference type="NCBI Taxonomy" id="1111708"/>
    <lineage>
        <taxon>Bacteria</taxon>
        <taxon>Bacillati</taxon>
        <taxon>Cyanobacteriota</taxon>
        <taxon>Cyanophyceae</taxon>
        <taxon>Synechococcales</taxon>
        <taxon>Merismopediaceae</taxon>
        <taxon>Synechocystis</taxon>
    </lineage>
</organism>
<accession>P74737</accession>
<reference key="1">
    <citation type="journal article" date="1996" name="DNA Res.">
        <title>Sequence analysis of the genome of the unicellular cyanobacterium Synechocystis sp. strain PCC6803. II. Sequence determination of the entire genome and assignment of potential protein-coding regions.</title>
        <authorList>
            <person name="Kaneko T."/>
            <person name="Sato S."/>
            <person name="Kotani H."/>
            <person name="Tanaka A."/>
            <person name="Asamizu E."/>
            <person name="Nakamura Y."/>
            <person name="Miyajima N."/>
            <person name="Hirosawa M."/>
            <person name="Sugiura M."/>
            <person name="Sasamoto S."/>
            <person name="Kimura T."/>
            <person name="Hosouchi T."/>
            <person name="Matsuno A."/>
            <person name="Muraki A."/>
            <person name="Nakazaki N."/>
            <person name="Naruo K."/>
            <person name="Okumura S."/>
            <person name="Shimpo S."/>
            <person name="Takeuchi C."/>
            <person name="Wada T."/>
            <person name="Watanabe A."/>
            <person name="Yamada M."/>
            <person name="Yasuda M."/>
            <person name="Tabata S."/>
        </authorList>
    </citation>
    <scope>NUCLEOTIDE SEQUENCE [LARGE SCALE GENOMIC DNA]</scope>
    <source>
        <strain>ATCC 27184 / PCC 6803 / Kazusa</strain>
    </source>
</reference>
<reference key="2">
    <citation type="journal article" date="2004" name="Mol. Microbiol.">
        <title>Function and regulation of the cyanobacterial genes lexA, recA and ruvB: LexA is critical to the survival of cells facing inorganic carbon starvation.</title>
        <authorList>
            <person name="Domain F."/>
            <person name="Houot L."/>
            <person name="Chauvat F."/>
            <person name="Cassier-Chauvat C."/>
        </authorList>
    </citation>
    <scope>INDUCTION</scope>
    <source>
        <strain>ATCC 27184 / PCC 6803 / Kazusa</strain>
    </source>
</reference>
<keyword id="KW-0067">ATP-binding</keyword>
<keyword id="KW-0963">Cytoplasm</keyword>
<keyword id="KW-0233">DNA recombination</keyword>
<keyword id="KW-0238">DNA-binding</keyword>
<keyword id="KW-0547">Nucleotide-binding</keyword>
<keyword id="KW-1185">Reference proteome</keyword>
<protein>
    <recommendedName>
        <fullName evidence="1">Protein RecA</fullName>
    </recommendedName>
    <alternativeName>
        <fullName evidence="1">Recombinase A</fullName>
    </alternativeName>
</protein>
<proteinExistence type="evidence at transcript level"/>
<comment type="function">
    <text evidence="1">Can catalyze the hydrolysis of ATP in the presence of single-stranded DNA, the ATP-dependent uptake of single-stranded DNA by duplex DNA, and the ATP-dependent hybridization of homologous single-stranded DNAs. It interacts with LexA causing its activation and leading to its autocatalytic cleavage.</text>
</comment>
<comment type="subcellular location">
    <subcellularLocation>
        <location evidence="1">Cytoplasm</location>
    </subcellularLocation>
</comment>
<comment type="induction">
    <text evidence="2">Expressed in light grown cells, strongly repressed post-transcriptionally by UV-C light, repressed by H(2)O(2) and SeO(4) but not by SeO(3) (PubMed:15225304).</text>
</comment>
<comment type="miscellaneous">
    <text evidence="3">This bacterium is considerably more resistant to UV and gamma irradiation than E.coli; the E.coli-like SOS regulon model is not an appropriate model for DNA repair in this cyanobacterium.</text>
</comment>
<comment type="similarity">
    <text evidence="1">Belongs to the RecA family.</text>
</comment>
<feature type="chain" id="PRO_0000122877" description="Protein RecA">
    <location>
        <begin position="1"/>
        <end position="354"/>
    </location>
</feature>
<feature type="binding site" evidence="1">
    <location>
        <begin position="68"/>
        <end position="75"/>
    </location>
    <ligand>
        <name>ATP</name>
        <dbReference type="ChEBI" id="CHEBI:30616"/>
    </ligand>
</feature>
<dbReference type="EMBL" id="BA000022">
    <property type="protein sequence ID" value="BAA18857.1"/>
    <property type="molecule type" value="Genomic_DNA"/>
</dbReference>
<dbReference type="PIR" id="S76945">
    <property type="entry name" value="S76945"/>
</dbReference>
<dbReference type="SMR" id="P74737"/>
<dbReference type="FunCoup" id="P74737">
    <property type="interactions" value="476"/>
</dbReference>
<dbReference type="IntAct" id="P74737">
    <property type="interactions" value="1"/>
</dbReference>
<dbReference type="STRING" id="1148.gene:10500629"/>
<dbReference type="PaxDb" id="1148-1653947"/>
<dbReference type="EnsemblBacteria" id="BAA18857">
    <property type="protein sequence ID" value="BAA18857"/>
    <property type="gene ID" value="BAA18857"/>
</dbReference>
<dbReference type="KEGG" id="syn:sll0569"/>
<dbReference type="eggNOG" id="COG0468">
    <property type="taxonomic scope" value="Bacteria"/>
</dbReference>
<dbReference type="InParanoid" id="P74737"/>
<dbReference type="PhylomeDB" id="P74737"/>
<dbReference type="Proteomes" id="UP000001425">
    <property type="component" value="Chromosome"/>
</dbReference>
<dbReference type="GO" id="GO:0005737">
    <property type="term" value="C:cytoplasm"/>
    <property type="evidence" value="ECO:0007669"/>
    <property type="project" value="UniProtKB-SubCell"/>
</dbReference>
<dbReference type="GO" id="GO:0005524">
    <property type="term" value="F:ATP binding"/>
    <property type="evidence" value="ECO:0007669"/>
    <property type="project" value="UniProtKB-UniRule"/>
</dbReference>
<dbReference type="GO" id="GO:0016887">
    <property type="term" value="F:ATP hydrolysis activity"/>
    <property type="evidence" value="ECO:0007669"/>
    <property type="project" value="InterPro"/>
</dbReference>
<dbReference type="GO" id="GO:0140664">
    <property type="term" value="F:ATP-dependent DNA damage sensor activity"/>
    <property type="evidence" value="ECO:0007669"/>
    <property type="project" value="InterPro"/>
</dbReference>
<dbReference type="GO" id="GO:0003684">
    <property type="term" value="F:damaged DNA binding"/>
    <property type="evidence" value="ECO:0007669"/>
    <property type="project" value="UniProtKB-UniRule"/>
</dbReference>
<dbReference type="GO" id="GO:0003697">
    <property type="term" value="F:single-stranded DNA binding"/>
    <property type="evidence" value="ECO:0007669"/>
    <property type="project" value="UniProtKB-UniRule"/>
</dbReference>
<dbReference type="GO" id="GO:0006310">
    <property type="term" value="P:DNA recombination"/>
    <property type="evidence" value="ECO:0007669"/>
    <property type="project" value="UniProtKB-UniRule"/>
</dbReference>
<dbReference type="GO" id="GO:0006281">
    <property type="term" value="P:DNA repair"/>
    <property type="evidence" value="ECO:0007669"/>
    <property type="project" value="UniProtKB-UniRule"/>
</dbReference>
<dbReference type="GO" id="GO:0009432">
    <property type="term" value="P:SOS response"/>
    <property type="evidence" value="ECO:0007669"/>
    <property type="project" value="UniProtKB-UniRule"/>
</dbReference>
<dbReference type="CDD" id="cd00983">
    <property type="entry name" value="RecA"/>
    <property type="match status" value="1"/>
</dbReference>
<dbReference type="FunFam" id="3.40.50.300:FF:000087">
    <property type="entry name" value="Recombinase RecA"/>
    <property type="match status" value="1"/>
</dbReference>
<dbReference type="Gene3D" id="3.40.50.300">
    <property type="entry name" value="P-loop containing nucleotide triphosphate hydrolases"/>
    <property type="match status" value="1"/>
</dbReference>
<dbReference type="HAMAP" id="MF_00268">
    <property type="entry name" value="RecA"/>
    <property type="match status" value="1"/>
</dbReference>
<dbReference type="InterPro" id="IPR003593">
    <property type="entry name" value="AAA+_ATPase"/>
</dbReference>
<dbReference type="InterPro" id="IPR013765">
    <property type="entry name" value="DNA_recomb/repair_RecA"/>
</dbReference>
<dbReference type="InterPro" id="IPR020584">
    <property type="entry name" value="DNA_recomb/repair_RecA_CS"/>
</dbReference>
<dbReference type="InterPro" id="IPR027417">
    <property type="entry name" value="P-loop_NTPase"/>
</dbReference>
<dbReference type="InterPro" id="IPR049261">
    <property type="entry name" value="RecA-like_C"/>
</dbReference>
<dbReference type="InterPro" id="IPR049428">
    <property type="entry name" value="RecA-like_N"/>
</dbReference>
<dbReference type="InterPro" id="IPR020588">
    <property type="entry name" value="RecA_ATP-bd"/>
</dbReference>
<dbReference type="InterPro" id="IPR023400">
    <property type="entry name" value="RecA_C_sf"/>
</dbReference>
<dbReference type="InterPro" id="IPR020587">
    <property type="entry name" value="RecA_monomer-monomer_interface"/>
</dbReference>
<dbReference type="NCBIfam" id="TIGR02012">
    <property type="entry name" value="tigrfam_recA"/>
    <property type="match status" value="1"/>
</dbReference>
<dbReference type="PANTHER" id="PTHR45900:SF1">
    <property type="entry name" value="MITOCHONDRIAL DNA REPAIR PROTEIN RECA HOMOLOG-RELATED"/>
    <property type="match status" value="1"/>
</dbReference>
<dbReference type="PANTHER" id="PTHR45900">
    <property type="entry name" value="RECA"/>
    <property type="match status" value="1"/>
</dbReference>
<dbReference type="Pfam" id="PF00154">
    <property type="entry name" value="RecA"/>
    <property type="match status" value="1"/>
</dbReference>
<dbReference type="Pfam" id="PF21096">
    <property type="entry name" value="RecA_C"/>
    <property type="match status" value="1"/>
</dbReference>
<dbReference type="PRINTS" id="PR00142">
    <property type="entry name" value="RECA"/>
</dbReference>
<dbReference type="SMART" id="SM00382">
    <property type="entry name" value="AAA"/>
    <property type="match status" value="1"/>
</dbReference>
<dbReference type="SUPFAM" id="SSF52540">
    <property type="entry name" value="P-loop containing nucleoside triphosphate hydrolases"/>
    <property type="match status" value="1"/>
</dbReference>
<dbReference type="SUPFAM" id="SSF54752">
    <property type="entry name" value="RecA protein, C-terminal domain"/>
    <property type="match status" value="1"/>
</dbReference>
<dbReference type="PROSITE" id="PS00321">
    <property type="entry name" value="RECA_1"/>
    <property type="match status" value="1"/>
</dbReference>
<dbReference type="PROSITE" id="PS50162">
    <property type="entry name" value="RECA_2"/>
    <property type="match status" value="1"/>
</dbReference>
<dbReference type="PROSITE" id="PS50163">
    <property type="entry name" value="RECA_3"/>
    <property type="match status" value="1"/>
</dbReference>